<reference key="1">
    <citation type="journal article" date="2009" name="Science">
        <title>The dynamics and time scale of ongoing genomic erosion in symbiotic bacteria.</title>
        <authorList>
            <person name="Moran N.A."/>
            <person name="McLaughlin H.J."/>
            <person name="Sorek R."/>
        </authorList>
    </citation>
    <scope>NUCLEOTIDE SEQUENCE [LARGE SCALE GENOMIC DNA]</scope>
    <source>
        <strain>Tuc7</strain>
    </source>
</reference>
<sequence length="142" mass="16265">MKTFSIKSSNIKRHWYYVDATNKILGRLASALSFHLRGKHKTEYTPHLDTGDYIIVINASKILVTGNKRINKIYYHHTGYVGGIKQSRFEEMISSHPERVIEIAVKGMLPKGALGRSMFKKLKVFSNENHEHIAQCPQLLNI</sequence>
<gene>
    <name evidence="1" type="primary">rplM</name>
    <name type="ordered locus">BUAPTUC7_385</name>
</gene>
<protein>
    <recommendedName>
        <fullName evidence="1">Large ribosomal subunit protein uL13</fullName>
    </recommendedName>
    <alternativeName>
        <fullName evidence="2">50S ribosomal protein L13</fullName>
    </alternativeName>
</protein>
<proteinExistence type="inferred from homology"/>
<comment type="function">
    <text evidence="1">This protein is one of the early assembly proteins of the 50S ribosomal subunit, although it is not seen to bind rRNA by itself. It is important during the early stages of 50S assembly.</text>
</comment>
<comment type="subunit">
    <text evidence="1">Part of the 50S ribosomal subunit.</text>
</comment>
<comment type="similarity">
    <text evidence="1">Belongs to the universal ribosomal protein uL13 family.</text>
</comment>
<accession>B8D7S6</accession>
<keyword id="KW-0687">Ribonucleoprotein</keyword>
<keyword id="KW-0689">Ribosomal protein</keyword>
<name>RL13_BUCAT</name>
<dbReference type="EMBL" id="CP001158">
    <property type="protein sequence ID" value="ACL30191.1"/>
    <property type="molecule type" value="Genomic_DNA"/>
</dbReference>
<dbReference type="RefSeq" id="WP_009874348.1">
    <property type="nucleotide sequence ID" value="NC_011834.1"/>
</dbReference>
<dbReference type="SMR" id="B8D7S6"/>
<dbReference type="KEGG" id="bau:BUAPTUC7_385"/>
<dbReference type="HOGENOM" id="CLU_082184_2_2_6"/>
<dbReference type="GO" id="GO:0022625">
    <property type="term" value="C:cytosolic large ribosomal subunit"/>
    <property type="evidence" value="ECO:0007669"/>
    <property type="project" value="TreeGrafter"/>
</dbReference>
<dbReference type="GO" id="GO:0003729">
    <property type="term" value="F:mRNA binding"/>
    <property type="evidence" value="ECO:0007669"/>
    <property type="project" value="TreeGrafter"/>
</dbReference>
<dbReference type="GO" id="GO:0003735">
    <property type="term" value="F:structural constituent of ribosome"/>
    <property type="evidence" value="ECO:0007669"/>
    <property type="project" value="InterPro"/>
</dbReference>
<dbReference type="GO" id="GO:0017148">
    <property type="term" value="P:negative regulation of translation"/>
    <property type="evidence" value="ECO:0007669"/>
    <property type="project" value="TreeGrafter"/>
</dbReference>
<dbReference type="GO" id="GO:0006412">
    <property type="term" value="P:translation"/>
    <property type="evidence" value="ECO:0007669"/>
    <property type="project" value="UniProtKB-UniRule"/>
</dbReference>
<dbReference type="CDD" id="cd00392">
    <property type="entry name" value="Ribosomal_L13"/>
    <property type="match status" value="1"/>
</dbReference>
<dbReference type="FunFam" id="3.90.1180.10:FF:000001">
    <property type="entry name" value="50S ribosomal protein L13"/>
    <property type="match status" value="1"/>
</dbReference>
<dbReference type="Gene3D" id="3.90.1180.10">
    <property type="entry name" value="Ribosomal protein L13"/>
    <property type="match status" value="1"/>
</dbReference>
<dbReference type="HAMAP" id="MF_01366">
    <property type="entry name" value="Ribosomal_uL13"/>
    <property type="match status" value="1"/>
</dbReference>
<dbReference type="InterPro" id="IPR005822">
    <property type="entry name" value="Ribosomal_uL13"/>
</dbReference>
<dbReference type="InterPro" id="IPR005823">
    <property type="entry name" value="Ribosomal_uL13_bac-type"/>
</dbReference>
<dbReference type="InterPro" id="IPR023563">
    <property type="entry name" value="Ribosomal_uL13_CS"/>
</dbReference>
<dbReference type="InterPro" id="IPR036899">
    <property type="entry name" value="Ribosomal_uL13_sf"/>
</dbReference>
<dbReference type="NCBIfam" id="TIGR01066">
    <property type="entry name" value="rplM_bact"/>
    <property type="match status" value="1"/>
</dbReference>
<dbReference type="PANTHER" id="PTHR11545:SF2">
    <property type="entry name" value="LARGE RIBOSOMAL SUBUNIT PROTEIN UL13M"/>
    <property type="match status" value="1"/>
</dbReference>
<dbReference type="PANTHER" id="PTHR11545">
    <property type="entry name" value="RIBOSOMAL PROTEIN L13"/>
    <property type="match status" value="1"/>
</dbReference>
<dbReference type="Pfam" id="PF00572">
    <property type="entry name" value="Ribosomal_L13"/>
    <property type="match status" value="1"/>
</dbReference>
<dbReference type="PIRSF" id="PIRSF002181">
    <property type="entry name" value="Ribosomal_L13"/>
    <property type="match status" value="1"/>
</dbReference>
<dbReference type="SUPFAM" id="SSF52161">
    <property type="entry name" value="Ribosomal protein L13"/>
    <property type="match status" value="1"/>
</dbReference>
<dbReference type="PROSITE" id="PS00783">
    <property type="entry name" value="RIBOSOMAL_L13"/>
    <property type="match status" value="1"/>
</dbReference>
<organism>
    <name type="scientific">Buchnera aphidicola subsp. Acyrthosiphon pisum (strain Tuc7)</name>
    <dbReference type="NCBI Taxonomy" id="561501"/>
    <lineage>
        <taxon>Bacteria</taxon>
        <taxon>Pseudomonadati</taxon>
        <taxon>Pseudomonadota</taxon>
        <taxon>Gammaproteobacteria</taxon>
        <taxon>Enterobacterales</taxon>
        <taxon>Erwiniaceae</taxon>
        <taxon>Buchnera</taxon>
    </lineage>
</organism>
<evidence type="ECO:0000255" key="1">
    <source>
        <dbReference type="HAMAP-Rule" id="MF_01366"/>
    </source>
</evidence>
<evidence type="ECO:0000305" key="2"/>
<feature type="chain" id="PRO_1000166857" description="Large ribosomal subunit protein uL13">
    <location>
        <begin position="1"/>
        <end position="142"/>
    </location>
</feature>